<reference key="1">
    <citation type="submission" date="2005-08" db="EMBL/GenBank/DDBJ databases">
        <title>Complete sequence of Pelodictyon luteolum DSM 273.</title>
        <authorList>
            <consortium name="US DOE Joint Genome Institute"/>
            <person name="Copeland A."/>
            <person name="Lucas S."/>
            <person name="Lapidus A."/>
            <person name="Barry K."/>
            <person name="Detter J.C."/>
            <person name="Glavina T."/>
            <person name="Hammon N."/>
            <person name="Israni S."/>
            <person name="Pitluck S."/>
            <person name="Bryant D."/>
            <person name="Schmutz J."/>
            <person name="Larimer F."/>
            <person name="Land M."/>
            <person name="Kyrpides N."/>
            <person name="Ivanova N."/>
            <person name="Richardson P."/>
        </authorList>
    </citation>
    <scope>NUCLEOTIDE SEQUENCE [LARGE SCALE GENOMIC DNA]</scope>
    <source>
        <strain>DSM 273 / BCRC 81028 / 2530</strain>
    </source>
</reference>
<keyword id="KW-0030">Aminoacyl-tRNA synthetase</keyword>
<keyword id="KW-0067">ATP-binding</keyword>
<keyword id="KW-0963">Cytoplasm</keyword>
<keyword id="KW-0436">Ligase</keyword>
<keyword id="KW-0547">Nucleotide-binding</keyword>
<keyword id="KW-0648">Protein biosynthesis</keyword>
<keyword id="KW-1185">Reference proteome</keyword>
<dbReference type="EC" id="6.1.1.23" evidence="1"/>
<dbReference type="EMBL" id="CP000096">
    <property type="protein sequence ID" value="ABB24180.1"/>
    <property type="molecule type" value="Genomic_DNA"/>
</dbReference>
<dbReference type="RefSeq" id="WP_011358052.1">
    <property type="nucleotide sequence ID" value="NC_007512.1"/>
</dbReference>
<dbReference type="SMR" id="Q3B3A1"/>
<dbReference type="STRING" id="319225.Plut_1320"/>
<dbReference type="KEGG" id="plt:Plut_1320"/>
<dbReference type="eggNOG" id="COG0173">
    <property type="taxonomic scope" value="Bacteria"/>
</dbReference>
<dbReference type="HOGENOM" id="CLU_014330_3_2_10"/>
<dbReference type="OrthoDB" id="9802326at2"/>
<dbReference type="Proteomes" id="UP000002709">
    <property type="component" value="Chromosome"/>
</dbReference>
<dbReference type="GO" id="GO:0005737">
    <property type="term" value="C:cytoplasm"/>
    <property type="evidence" value="ECO:0007669"/>
    <property type="project" value="UniProtKB-SubCell"/>
</dbReference>
<dbReference type="GO" id="GO:0004815">
    <property type="term" value="F:aspartate-tRNA ligase activity"/>
    <property type="evidence" value="ECO:0007669"/>
    <property type="project" value="UniProtKB-UniRule"/>
</dbReference>
<dbReference type="GO" id="GO:0050560">
    <property type="term" value="F:aspartate-tRNA(Asn) ligase activity"/>
    <property type="evidence" value="ECO:0007669"/>
    <property type="project" value="UniProtKB-EC"/>
</dbReference>
<dbReference type="GO" id="GO:0005524">
    <property type="term" value="F:ATP binding"/>
    <property type="evidence" value="ECO:0007669"/>
    <property type="project" value="UniProtKB-UniRule"/>
</dbReference>
<dbReference type="GO" id="GO:0003676">
    <property type="term" value="F:nucleic acid binding"/>
    <property type="evidence" value="ECO:0007669"/>
    <property type="project" value="InterPro"/>
</dbReference>
<dbReference type="GO" id="GO:0006422">
    <property type="term" value="P:aspartyl-tRNA aminoacylation"/>
    <property type="evidence" value="ECO:0007669"/>
    <property type="project" value="UniProtKB-UniRule"/>
</dbReference>
<dbReference type="CDD" id="cd00777">
    <property type="entry name" value="AspRS_core"/>
    <property type="match status" value="1"/>
</dbReference>
<dbReference type="CDD" id="cd04317">
    <property type="entry name" value="EcAspRS_like_N"/>
    <property type="match status" value="1"/>
</dbReference>
<dbReference type="Gene3D" id="3.30.930.10">
    <property type="entry name" value="Bira Bifunctional Protein, Domain 2"/>
    <property type="match status" value="1"/>
</dbReference>
<dbReference type="Gene3D" id="3.30.1360.30">
    <property type="entry name" value="GAD-like domain"/>
    <property type="match status" value="1"/>
</dbReference>
<dbReference type="Gene3D" id="2.40.50.140">
    <property type="entry name" value="Nucleic acid-binding proteins"/>
    <property type="match status" value="1"/>
</dbReference>
<dbReference type="HAMAP" id="MF_00044">
    <property type="entry name" value="Asp_tRNA_synth_type1"/>
    <property type="match status" value="1"/>
</dbReference>
<dbReference type="InterPro" id="IPR004364">
    <property type="entry name" value="Aa-tRNA-synt_II"/>
</dbReference>
<dbReference type="InterPro" id="IPR006195">
    <property type="entry name" value="aa-tRNA-synth_II"/>
</dbReference>
<dbReference type="InterPro" id="IPR045864">
    <property type="entry name" value="aa-tRNA-synth_II/BPL/LPL"/>
</dbReference>
<dbReference type="InterPro" id="IPR004524">
    <property type="entry name" value="Asp-tRNA-ligase_1"/>
</dbReference>
<dbReference type="InterPro" id="IPR047089">
    <property type="entry name" value="Asp-tRNA-ligase_1_N"/>
</dbReference>
<dbReference type="InterPro" id="IPR002312">
    <property type="entry name" value="Asp/Asn-tRNA-synth_IIb"/>
</dbReference>
<dbReference type="InterPro" id="IPR047090">
    <property type="entry name" value="AspRS_core"/>
</dbReference>
<dbReference type="InterPro" id="IPR004115">
    <property type="entry name" value="GAD-like_sf"/>
</dbReference>
<dbReference type="InterPro" id="IPR029351">
    <property type="entry name" value="GAD_dom"/>
</dbReference>
<dbReference type="InterPro" id="IPR012340">
    <property type="entry name" value="NA-bd_OB-fold"/>
</dbReference>
<dbReference type="InterPro" id="IPR004365">
    <property type="entry name" value="NA-bd_OB_tRNA"/>
</dbReference>
<dbReference type="NCBIfam" id="TIGR00459">
    <property type="entry name" value="aspS_bact"/>
    <property type="match status" value="1"/>
</dbReference>
<dbReference type="NCBIfam" id="NF001750">
    <property type="entry name" value="PRK00476.1"/>
    <property type="match status" value="1"/>
</dbReference>
<dbReference type="PANTHER" id="PTHR22594:SF5">
    <property type="entry name" value="ASPARTATE--TRNA LIGASE, MITOCHONDRIAL"/>
    <property type="match status" value="1"/>
</dbReference>
<dbReference type="PANTHER" id="PTHR22594">
    <property type="entry name" value="ASPARTYL/LYSYL-TRNA SYNTHETASE"/>
    <property type="match status" value="1"/>
</dbReference>
<dbReference type="Pfam" id="PF02938">
    <property type="entry name" value="GAD"/>
    <property type="match status" value="1"/>
</dbReference>
<dbReference type="Pfam" id="PF00152">
    <property type="entry name" value="tRNA-synt_2"/>
    <property type="match status" value="1"/>
</dbReference>
<dbReference type="Pfam" id="PF01336">
    <property type="entry name" value="tRNA_anti-codon"/>
    <property type="match status" value="1"/>
</dbReference>
<dbReference type="PRINTS" id="PR01042">
    <property type="entry name" value="TRNASYNTHASP"/>
</dbReference>
<dbReference type="SUPFAM" id="SSF55681">
    <property type="entry name" value="Class II aaRS and biotin synthetases"/>
    <property type="match status" value="1"/>
</dbReference>
<dbReference type="SUPFAM" id="SSF55261">
    <property type="entry name" value="GAD domain-like"/>
    <property type="match status" value="1"/>
</dbReference>
<dbReference type="SUPFAM" id="SSF50249">
    <property type="entry name" value="Nucleic acid-binding proteins"/>
    <property type="match status" value="1"/>
</dbReference>
<dbReference type="PROSITE" id="PS50862">
    <property type="entry name" value="AA_TRNA_LIGASE_II"/>
    <property type="match status" value="1"/>
</dbReference>
<accession>Q3B3A1</accession>
<name>SYDND_CHLL3</name>
<organism>
    <name type="scientific">Chlorobium luteolum (strain DSM 273 / BCRC 81028 / 2530)</name>
    <name type="common">Pelodictyon luteolum</name>
    <dbReference type="NCBI Taxonomy" id="319225"/>
    <lineage>
        <taxon>Bacteria</taxon>
        <taxon>Pseudomonadati</taxon>
        <taxon>Chlorobiota</taxon>
        <taxon>Chlorobiia</taxon>
        <taxon>Chlorobiales</taxon>
        <taxon>Chlorobiaceae</taxon>
        <taxon>Chlorobium/Pelodictyon group</taxon>
        <taxon>Pelodictyon</taxon>
    </lineage>
</organism>
<proteinExistence type="inferred from homology"/>
<feature type="chain" id="PRO_0000235541" description="Aspartate--tRNA(Asp/Asn) ligase">
    <location>
        <begin position="1"/>
        <end position="604"/>
    </location>
</feature>
<feature type="region of interest" description="Aspartate" evidence="1">
    <location>
        <begin position="211"/>
        <end position="214"/>
    </location>
</feature>
<feature type="binding site" evidence="1">
    <location>
        <position position="187"/>
    </location>
    <ligand>
        <name>L-aspartate</name>
        <dbReference type="ChEBI" id="CHEBI:29991"/>
    </ligand>
</feature>
<feature type="binding site" evidence="1">
    <location>
        <begin position="233"/>
        <end position="235"/>
    </location>
    <ligand>
        <name>ATP</name>
        <dbReference type="ChEBI" id="CHEBI:30616"/>
    </ligand>
</feature>
<feature type="binding site" evidence="1">
    <location>
        <position position="233"/>
    </location>
    <ligand>
        <name>L-aspartate</name>
        <dbReference type="ChEBI" id="CHEBI:29991"/>
    </ligand>
</feature>
<feature type="binding site" evidence="1">
    <location>
        <position position="461"/>
    </location>
    <ligand>
        <name>L-aspartate</name>
        <dbReference type="ChEBI" id="CHEBI:29991"/>
    </ligand>
</feature>
<feature type="binding site" evidence="1">
    <location>
        <position position="495"/>
    </location>
    <ligand>
        <name>ATP</name>
        <dbReference type="ChEBI" id="CHEBI:30616"/>
    </ligand>
</feature>
<feature type="binding site" evidence="1">
    <location>
        <position position="502"/>
    </location>
    <ligand>
        <name>L-aspartate</name>
        <dbReference type="ChEBI" id="CHEBI:29991"/>
    </ligand>
</feature>
<feature type="binding site" evidence="1">
    <location>
        <begin position="547"/>
        <end position="550"/>
    </location>
    <ligand>
        <name>ATP</name>
        <dbReference type="ChEBI" id="CHEBI:30616"/>
    </ligand>
</feature>
<feature type="site" description="Important for tRNA non-discrimination" evidence="1">
    <location>
        <position position="44"/>
    </location>
</feature>
<protein>
    <recommendedName>
        <fullName evidence="1">Aspartate--tRNA(Asp/Asn) ligase</fullName>
        <ecNumber evidence="1">6.1.1.23</ecNumber>
    </recommendedName>
    <alternativeName>
        <fullName evidence="1">Aspartyl-tRNA synthetase</fullName>
        <shortName evidence="1">AspRS</shortName>
    </alternativeName>
    <alternativeName>
        <fullName evidence="1">Non-discriminating aspartyl-tRNA synthetase</fullName>
        <shortName evidence="1">ND-AspRS</shortName>
    </alternativeName>
</protein>
<sequence>MTKEAGELNALKNRFRTDYCGQLGLDGEGREVRLGGWVHRIRDHGGLVFIDLRDHTGICQLVVQPEREELFELAGRLHAESVITIEGRVVARSSETINPRLASGSIEVVVSAIGVESHARPLPFPVADEVQTSEELRLKYRFIDLRREKIHENIIFRSRISAAIRRYLEERDFIEIQTPILTSSSPEGARDFLVPSRLHPGKFYALPQAPQQFKQLLMVAGFPRYFQIAPCFRDEDARADRSPGEFYQLDMEMAFIEQDDLFEILEGMFRHLTDTMSKKRITRFPFPRISYREVMDSYGTDKPDLRIPLKIEDVTPMFTDSGFKVFASNTKPGCAVKALVLKGRGTESRLFYDKAEKRARELGSAGLAYIQFREEGPKGPIVKFMTEPELQAMKDQLTLETGDVVFFAAGKWEAACKIMGGMRTYFGDLFTLDPDELSFCWIVDFPMFEYNEDAKKVDFSHNPFSMPQGEMEALETMDPLDVLAYQYDIVCNGIELSSGAIRNHKPEIMYKAFEIAGYSREEVDLRFGHMIEAFKLGAPPHGGIAPGLDRLVMILRDEQNIREVIAFPMNQQAQDLMMAAPSEVTGAQLRELHIRLDLPEEEKK</sequence>
<comment type="function">
    <text evidence="1">Aspartyl-tRNA synthetase with relaxed tRNA specificity since it is able to aspartylate not only its cognate tRNA(Asp) but also tRNA(Asn). Reaction proceeds in two steps: L-aspartate is first activated by ATP to form Asp-AMP and then transferred to the acceptor end of tRNA(Asp/Asn).</text>
</comment>
<comment type="catalytic activity">
    <reaction evidence="1">
        <text>tRNA(Asx) + L-aspartate + ATP = L-aspartyl-tRNA(Asx) + AMP + diphosphate</text>
        <dbReference type="Rhea" id="RHEA:18349"/>
        <dbReference type="Rhea" id="RHEA-COMP:9710"/>
        <dbReference type="Rhea" id="RHEA-COMP:9711"/>
        <dbReference type="ChEBI" id="CHEBI:29991"/>
        <dbReference type="ChEBI" id="CHEBI:30616"/>
        <dbReference type="ChEBI" id="CHEBI:33019"/>
        <dbReference type="ChEBI" id="CHEBI:78442"/>
        <dbReference type="ChEBI" id="CHEBI:78516"/>
        <dbReference type="ChEBI" id="CHEBI:456215"/>
        <dbReference type="EC" id="6.1.1.23"/>
    </reaction>
</comment>
<comment type="subunit">
    <text evidence="1">Homodimer.</text>
</comment>
<comment type="subcellular location">
    <subcellularLocation>
        <location evidence="1">Cytoplasm</location>
    </subcellularLocation>
</comment>
<comment type="similarity">
    <text evidence="1">Belongs to the class-II aminoacyl-tRNA synthetase family. Type 1 subfamily.</text>
</comment>
<evidence type="ECO:0000255" key="1">
    <source>
        <dbReference type="HAMAP-Rule" id="MF_00044"/>
    </source>
</evidence>
<gene>
    <name evidence="1" type="primary">aspS</name>
    <name type="ordered locus">Plut_1320</name>
</gene>